<reference key="1">
    <citation type="submission" date="2009-04" db="EMBL/GenBank/DDBJ databases">
        <title>Genome sequence of Bacillus anthracis A0248.</title>
        <authorList>
            <person name="Dodson R.J."/>
            <person name="Munk A.C."/>
            <person name="Bruce D."/>
            <person name="Detter C."/>
            <person name="Tapia R."/>
            <person name="Sutton G."/>
            <person name="Sims D."/>
            <person name="Brettin T."/>
        </authorList>
    </citation>
    <scope>NUCLEOTIDE SEQUENCE [LARGE SCALE GENOMIC DNA]</scope>
    <source>
        <strain>A0248</strain>
    </source>
</reference>
<gene>
    <name evidence="1" type="primary">adk</name>
    <name type="ordered locus">BAA_0147</name>
</gene>
<evidence type="ECO:0000255" key="1">
    <source>
        <dbReference type="HAMAP-Rule" id="MF_00235"/>
    </source>
</evidence>
<comment type="function">
    <text evidence="1">Catalyzes the reversible transfer of the terminal phosphate group between ATP and AMP. Plays an important role in cellular energy homeostasis and in adenine nucleotide metabolism.</text>
</comment>
<comment type="catalytic activity">
    <reaction evidence="1">
        <text>AMP + ATP = 2 ADP</text>
        <dbReference type="Rhea" id="RHEA:12973"/>
        <dbReference type="ChEBI" id="CHEBI:30616"/>
        <dbReference type="ChEBI" id="CHEBI:456215"/>
        <dbReference type="ChEBI" id="CHEBI:456216"/>
        <dbReference type="EC" id="2.7.4.3"/>
    </reaction>
</comment>
<comment type="pathway">
    <text evidence="1">Purine metabolism; AMP biosynthesis via salvage pathway; AMP from ADP: step 1/1.</text>
</comment>
<comment type="subunit">
    <text evidence="1">Monomer.</text>
</comment>
<comment type="subcellular location">
    <subcellularLocation>
        <location evidence="1">Cytoplasm</location>
    </subcellularLocation>
</comment>
<comment type="domain">
    <text evidence="1">Consists of three domains, a large central CORE domain and two small peripheral domains, NMPbind and LID, which undergo movements during catalysis. The LID domain closes over the site of phosphoryl transfer upon ATP binding. Assembling and dissambling the active center during each catalytic cycle provides an effective means to prevent ATP hydrolysis. Some bacteria have evolved a zinc-coordinating structure that stabilizes the LID domain.</text>
</comment>
<comment type="similarity">
    <text evidence="1">Belongs to the adenylate kinase family.</text>
</comment>
<organism>
    <name type="scientific">Bacillus anthracis (strain A0248)</name>
    <dbReference type="NCBI Taxonomy" id="592021"/>
    <lineage>
        <taxon>Bacteria</taxon>
        <taxon>Bacillati</taxon>
        <taxon>Bacillota</taxon>
        <taxon>Bacilli</taxon>
        <taxon>Bacillales</taxon>
        <taxon>Bacillaceae</taxon>
        <taxon>Bacillus</taxon>
        <taxon>Bacillus cereus group</taxon>
    </lineage>
</organism>
<accession>C3P9S6</accession>
<protein>
    <recommendedName>
        <fullName evidence="1">Adenylate kinase</fullName>
        <shortName evidence="1">AK</shortName>
        <ecNumber evidence="1">2.7.4.3</ecNumber>
    </recommendedName>
    <alternativeName>
        <fullName evidence="1">ATP-AMP transphosphorylase</fullName>
    </alternativeName>
    <alternativeName>
        <fullName evidence="1">ATP:AMP phosphotransferase</fullName>
    </alternativeName>
    <alternativeName>
        <fullName evidence="1">Adenylate monophosphate kinase</fullName>
    </alternativeName>
</protein>
<proteinExistence type="inferred from homology"/>
<feature type="chain" id="PRO_1000191120" description="Adenylate kinase">
    <location>
        <begin position="1"/>
        <end position="216"/>
    </location>
</feature>
<feature type="region of interest" description="NMP" evidence="1">
    <location>
        <begin position="30"/>
        <end position="59"/>
    </location>
</feature>
<feature type="region of interest" description="LID" evidence="1">
    <location>
        <begin position="126"/>
        <end position="163"/>
    </location>
</feature>
<feature type="binding site" evidence="1">
    <location>
        <begin position="10"/>
        <end position="15"/>
    </location>
    <ligand>
        <name>ATP</name>
        <dbReference type="ChEBI" id="CHEBI:30616"/>
    </ligand>
</feature>
<feature type="binding site" evidence="1">
    <location>
        <position position="31"/>
    </location>
    <ligand>
        <name>AMP</name>
        <dbReference type="ChEBI" id="CHEBI:456215"/>
    </ligand>
</feature>
<feature type="binding site" evidence="1">
    <location>
        <position position="36"/>
    </location>
    <ligand>
        <name>AMP</name>
        <dbReference type="ChEBI" id="CHEBI:456215"/>
    </ligand>
</feature>
<feature type="binding site" evidence="1">
    <location>
        <begin position="57"/>
        <end position="59"/>
    </location>
    <ligand>
        <name>AMP</name>
        <dbReference type="ChEBI" id="CHEBI:456215"/>
    </ligand>
</feature>
<feature type="binding site" evidence="1">
    <location>
        <begin position="85"/>
        <end position="88"/>
    </location>
    <ligand>
        <name>AMP</name>
        <dbReference type="ChEBI" id="CHEBI:456215"/>
    </ligand>
</feature>
<feature type="binding site" evidence="1">
    <location>
        <position position="92"/>
    </location>
    <ligand>
        <name>AMP</name>
        <dbReference type="ChEBI" id="CHEBI:456215"/>
    </ligand>
</feature>
<feature type="binding site" evidence="1">
    <location>
        <position position="127"/>
    </location>
    <ligand>
        <name>ATP</name>
        <dbReference type="ChEBI" id="CHEBI:30616"/>
    </ligand>
</feature>
<feature type="binding site" evidence="1">
    <location>
        <position position="130"/>
    </location>
    <ligand>
        <name>Zn(2+)</name>
        <dbReference type="ChEBI" id="CHEBI:29105"/>
        <note>structural</note>
    </ligand>
</feature>
<feature type="binding site" evidence="1">
    <location>
        <position position="133"/>
    </location>
    <ligand>
        <name>Zn(2+)</name>
        <dbReference type="ChEBI" id="CHEBI:29105"/>
        <note>structural</note>
    </ligand>
</feature>
<feature type="binding site" evidence="1">
    <location>
        <begin position="136"/>
        <end position="137"/>
    </location>
    <ligand>
        <name>ATP</name>
        <dbReference type="ChEBI" id="CHEBI:30616"/>
    </ligand>
</feature>
<feature type="binding site" evidence="1">
    <location>
        <position position="150"/>
    </location>
    <ligand>
        <name>Zn(2+)</name>
        <dbReference type="ChEBI" id="CHEBI:29105"/>
        <note>structural</note>
    </ligand>
</feature>
<feature type="binding site" evidence="1">
    <location>
        <position position="153"/>
    </location>
    <ligand>
        <name>Zn(2+)</name>
        <dbReference type="ChEBI" id="CHEBI:29105"/>
        <note>structural</note>
    </ligand>
</feature>
<feature type="binding site" evidence="1">
    <location>
        <position position="160"/>
    </location>
    <ligand>
        <name>AMP</name>
        <dbReference type="ChEBI" id="CHEBI:456215"/>
    </ligand>
</feature>
<feature type="binding site" evidence="1">
    <location>
        <position position="171"/>
    </location>
    <ligand>
        <name>AMP</name>
        <dbReference type="ChEBI" id="CHEBI:456215"/>
    </ligand>
</feature>
<feature type="binding site" evidence="1">
    <location>
        <position position="199"/>
    </location>
    <ligand>
        <name>ATP</name>
        <dbReference type="ChEBI" id="CHEBI:30616"/>
    </ligand>
</feature>
<dbReference type="EC" id="2.7.4.3" evidence="1"/>
<dbReference type="EMBL" id="CP001598">
    <property type="protein sequence ID" value="ACQ48854.1"/>
    <property type="molecule type" value="Genomic_DNA"/>
</dbReference>
<dbReference type="RefSeq" id="WP_001048992.1">
    <property type="nucleotide sequence ID" value="NC_012659.1"/>
</dbReference>
<dbReference type="SMR" id="C3P9S6"/>
<dbReference type="KEGG" id="bai:BAA_0147"/>
<dbReference type="HOGENOM" id="CLU_032354_1_2_9"/>
<dbReference type="UniPathway" id="UPA00588">
    <property type="reaction ID" value="UER00649"/>
</dbReference>
<dbReference type="GO" id="GO:0005737">
    <property type="term" value="C:cytoplasm"/>
    <property type="evidence" value="ECO:0007669"/>
    <property type="project" value="UniProtKB-SubCell"/>
</dbReference>
<dbReference type="GO" id="GO:0004017">
    <property type="term" value="F:adenylate kinase activity"/>
    <property type="evidence" value="ECO:0007669"/>
    <property type="project" value="UniProtKB-UniRule"/>
</dbReference>
<dbReference type="GO" id="GO:0005524">
    <property type="term" value="F:ATP binding"/>
    <property type="evidence" value="ECO:0007669"/>
    <property type="project" value="UniProtKB-UniRule"/>
</dbReference>
<dbReference type="GO" id="GO:0008270">
    <property type="term" value="F:zinc ion binding"/>
    <property type="evidence" value="ECO:0007669"/>
    <property type="project" value="UniProtKB-UniRule"/>
</dbReference>
<dbReference type="GO" id="GO:0044209">
    <property type="term" value="P:AMP salvage"/>
    <property type="evidence" value="ECO:0007669"/>
    <property type="project" value="UniProtKB-UniRule"/>
</dbReference>
<dbReference type="CDD" id="cd01428">
    <property type="entry name" value="ADK"/>
    <property type="match status" value="1"/>
</dbReference>
<dbReference type="FunFam" id="3.40.50.300:FF:000106">
    <property type="entry name" value="Adenylate kinase mitochondrial"/>
    <property type="match status" value="1"/>
</dbReference>
<dbReference type="Gene3D" id="3.40.50.300">
    <property type="entry name" value="P-loop containing nucleotide triphosphate hydrolases"/>
    <property type="match status" value="1"/>
</dbReference>
<dbReference type="HAMAP" id="MF_00235">
    <property type="entry name" value="Adenylate_kinase_Adk"/>
    <property type="match status" value="1"/>
</dbReference>
<dbReference type="InterPro" id="IPR006259">
    <property type="entry name" value="Adenyl_kin_sub"/>
</dbReference>
<dbReference type="InterPro" id="IPR000850">
    <property type="entry name" value="Adenylat/UMP-CMP_kin"/>
</dbReference>
<dbReference type="InterPro" id="IPR033690">
    <property type="entry name" value="Adenylat_kinase_CS"/>
</dbReference>
<dbReference type="InterPro" id="IPR007862">
    <property type="entry name" value="Adenylate_kinase_lid-dom"/>
</dbReference>
<dbReference type="InterPro" id="IPR027417">
    <property type="entry name" value="P-loop_NTPase"/>
</dbReference>
<dbReference type="NCBIfam" id="TIGR01351">
    <property type="entry name" value="adk"/>
    <property type="match status" value="1"/>
</dbReference>
<dbReference type="NCBIfam" id="NF001380">
    <property type="entry name" value="PRK00279.1-2"/>
    <property type="match status" value="1"/>
</dbReference>
<dbReference type="NCBIfam" id="NF001381">
    <property type="entry name" value="PRK00279.1-3"/>
    <property type="match status" value="1"/>
</dbReference>
<dbReference type="NCBIfam" id="NF011100">
    <property type="entry name" value="PRK14527.1"/>
    <property type="match status" value="1"/>
</dbReference>
<dbReference type="PANTHER" id="PTHR23359">
    <property type="entry name" value="NUCLEOTIDE KINASE"/>
    <property type="match status" value="1"/>
</dbReference>
<dbReference type="Pfam" id="PF00406">
    <property type="entry name" value="ADK"/>
    <property type="match status" value="1"/>
</dbReference>
<dbReference type="Pfam" id="PF05191">
    <property type="entry name" value="ADK_lid"/>
    <property type="match status" value="1"/>
</dbReference>
<dbReference type="PRINTS" id="PR00094">
    <property type="entry name" value="ADENYLTKNASE"/>
</dbReference>
<dbReference type="SUPFAM" id="SSF52540">
    <property type="entry name" value="P-loop containing nucleoside triphosphate hydrolases"/>
    <property type="match status" value="1"/>
</dbReference>
<dbReference type="PROSITE" id="PS00113">
    <property type="entry name" value="ADENYLATE_KINASE"/>
    <property type="match status" value="1"/>
</dbReference>
<name>KAD_BACAA</name>
<keyword id="KW-0067">ATP-binding</keyword>
<keyword id="KW-0963">Cytoplasm</keyword>
<keyword id="KW-0418">Kinase</keyword>
<keyword id="KW-0479">Metal-binding</keyword>
<keyword id="KW-0545">Nucleotide biosynthesis</keyword>
<keyword id="KW-0547">Nucleotide-binding</keyword>
<keyword id="KW-0808">Transferase</keyword>
<keyword id="KW-0862">Zinc</keyword>
<sequence>MNLILMGLPGAGKGTQAEQIVAKYNIPHISTGDMFRAAMKAETEMGLQAKSFIDKGALVPDEVTIGIVRERLSQEDCVRGFLLDGFPRTVAQASALEEIMKDLGKKIDYVLNINVDSGLLLKRLTGRRICKECGATYHLEFNAPAKADVCDKCGGELYQRSDDNEETVANRLDVNIKQTKPLLDFYEELGYLQSINGEQDINKVFADIDVLIGGLA</sequence>